<comment type="catalytic activity">
    <reaction evidence="1">
        <text>L-arginine + H2O = urea + L-ornithine</text>
        <dbReference type="Rhea" id="RHEA:20569"/>
        <dbReference type="ChEBI" id="CHEBI:15377"/>
        <dbReference type="ChEBI" id="CHEBI:16199"/>
        <dbReference type="ChEBI" id="CHEBI:32682"/>
        <dbReference type="ChEBI" id="CHEBI:46911"/>
        <dbReference type="EC" id="3.5.3.1"/>
    </reaction>
</comment>
<comment type="cofactor">
    <cofactor evidence="3">
        <name>Mn(2+)</name>
        <dbReference type="ChEBI" id="CHEBI:29035"/>
    </cofactor>
    <text evidence="3">Binds 2 manganese ions per subunit.</text>
</comment>
<comment type="pathway">
    <text evidence="1">Nitrogen metabolism; urea cycle; L-ornithine and urea from L-arginine: step 1/1.</text>
</comment>
<comment type="subunit">
    <text>Homotrimer.</text>
</comment>
<comment type="tissue specificity">
    <text>Strongest expression in liver.</text>
</comment>
<comment type="developmental stage">
    <text evidence="5">First expressed at stage 10/11 of gastrulation. Higher levels found at stages 23/24 and 60-62. In the intestine, expression increased during metamorphosis (stage 62/64) and then, decreased. In the tail region, highest levels were found at the time of tail resorption. Activated, but at low levels, at stages 56-58 of hindlimb development.</text>
</comment>
<comment type="induction">
    <text>Slow-response activation by thyroid hormone (T3).</text>
</comment>
<comment type="similarity">
    <text evidence="3">Belongs to the arginase family.</text>
</comment>
<feature type="chain" id="PRO_0000173698" description="Arginase-1">
    <location>
        <begin position="1"/>
        <end position="316"/>
    </location>
</feature>
<feature type="region of interest" description="Disordered" evidence="4">
    <location>
        <begin position="1"/>
        <end position="26"/>
    </location>
</feature>
<feature type="binding site" evidence="3">
    <location>
        <position position="101"/>
    </location>
    <ligand>
        <name>Mn(2+)</name>
        <dbReference type="ChEBI" id="CHEBI:29035"/>
        <label>1</label>
    </ligand>
</feature>
<feature type="binding site" evidence="3">
    <location>
        <position position="124"/>
    </location>
    <ligand>
        <name>Mn(2+)</name>
        <dbReference type="ChEBI" id="CHEBI:29035"/>
        <label>1</label>
    </ligand>
</feature>
<feature type="binding site" evidence="3">
    <location>
        <position position="124"/>
    </location>
    <ligand>
        <name>Mn(2+)</name>
        <dbReference type="ChEBI" id="CHEBI:29035"/>
        <label>2</label>
    </ligand>
</feature>
<feature type="binding site" evidence="1">
    <location>
        <begin position="126"/>
        <end position="130"/>
    </location>
    <ligand>
        <name>substrate</name>
    </ligand>
</feature>
<feature type="binding site" evidence="3">
    <location>
        <position position="126"/>
    </location>
    <ligand>
        <name>Mn(2+)</name>
        <dbReference type="ChEBI" id="CHEBI:29035"/>
        <label>2</label>
    </ligand>
</feature>
<feature type="binding site" evidence="3">
    <location>
        <position position="128"/>
    </location>
    <ligand>
        <name>Mn(2+)</name>
        <dbReference type="ChEBI" id="CHEBI:29035"/>
        <label>1</label>
    </ligand>
</feature>
<feature type="binding site" evidence="1">
    <location>
        <begin position="137"/>
        <end position="139"/>
    </location>
    <ligand>
        <name>substrate</name>
    </ligand>
</feature>
<feature type="binding site" evidence="1">
    <location>
        <position position="183"/>
    </location>
    <ligand>
        <name>substrate</name>
    </ligand>
</feature>
<feature type="binding site" evidence="3">
    <location>
        <position position="232"/>
    </location>
    <ligand>
        <name>Mn(2+)</name>
        <dbReference type="ChEBI" id="CHEBI:29035"/>
        <label>1</label>
    </ligand>
</feature>
<feature type="binding site" evidence="3">
    <location>
        <position position="232"/>
    </location>
    <ligand>
        <name>Mn(2+)</name>
        <dbReference type="ChEBI" id="CHEBI:29035"/>
        <label>2</label>
    </ligand>
</feature>
<feature type="binding site" evidence="3">
    <location>
        <position position="234"/>
    </location>
    <ligand>
        <name>Mn(2+)</name>
        <dbReference type="ChEBI" id="CHEBI:29035"/>
        <label>2</label>
    </ligand>
</feature>
<feature type="binding site" evidence="2">
    <location>
        <position position="246"/>
    </location>
    <ligand>
        <name>substrate</name>
    </ligand>
</feature>
<sequence length="316" mass="34566">MAKERHSVGVIGAPFSKGQPRRGVEEGPKYLREAGLIEKLREFGNDVRDCGDLDFPDVPNDTPFNNVKNPRTVGKATEILANAVTAVKKADKTCQSIGGDHSLAVGTIAGHAAVHPNLCVVWVDAHADINTPSTSPCGNLHGQPLSFLMKELKAKMPAVPGFEWVKPCLRSKDIVYIGLRDVDPGEHYILKTLGIKYLSMIEVDYLKDDKVMEETLEYLVGKHKRPIHLSFDIDGLDPSIAPATGTPCPGGRTYREGRILHEQLHKTGLLSGVDTIWMESTSRGETKRDVEVTVKTALDMTLSCFGKAREGFHAST</sequence>
<proteinExistence type="evidence at transcript level"/>
<reference key="1">
    <citation type="journal article" date="1993" name="Eur. J. Biochem.">
        <title>Developmental and hormonal regulation of the Xenopus liver-type arginase gene.</title>
        <authorList>
            <person name="Xu Q."/>
            <person name="Baker B.S."/>
            <person name="Tata J.R."/>
        </authorList>
    </citation>
    <scope>NUCLEOTIDE SEQUENCE [MRNA]</scope>
    <source>
        <tissue>Liver</tissue>
    </source>
</reference>
<reference key="2">
    <citation type="journal article" date="1994" name="J. Biol. Chem.">
        <title>Thyroid hormone-dependent differential regulation of multiple arginase genes during amphibian metamorphosis.</title>
        <authorList>
            <person name="Patterton D."/>
            <person name="Shi Y.-B."/>
        </authorList>
    </citation>
    <scope>DEVELOPMENTAL STAGE</scope>
</reference>
<protein>
    <recommendedName>
        <fullName>Arginase-1</fullName>
        <ecNumber evidence="1">3.5.3.1</ecNumber>
    </recommendedName>
    <alternativeName>
        <fullName>Arginase, hepatic</fullName>
    </alternativeName>
    <alternativeName>
        <fullName>Type I arginase</fullName>
    </alternativeName>
</protein>
<organism>
    <name type="scientific">Xenopus laevis</name>
    <name type="common">African clawed frog</name>
    <dbReference type="NCBI Taxonomy" id="8355"/>
    <lineage>
        <taxon>Eukaryota</taxon>
        <taxon>Metazoa</taxon>
        <taxon>Chordata</taxon>
        <taxon>Craniata</taxon>
        <taxon>Vertebrata</taxon>
        <taxon>Euteleostomi</taxon>
        <taxon>Amphibia</taxon>
        <taxon>Batrachia</taxon>
        <taxon>Anura</taxon>
        <taxon>Pipoidea</taxon>
        <taxon>Pipidae</taxon>
        <taxon>Xenopodinae</taxon>
        <taxon>Xenopus</taxon>
        <taxon>Xenopus</taxon>
    </lineage>
</organism>
<dbReference type="EC" id="3.5.3.1" evidence="1"/>
<dbReference type="EMBL" id="X69820">
    <property type="protein sequence ID" value="CAA49474.1"/>
    <property type="molecule type" value="mRNA"/>
</dbReference>
<dbReference type="PIR" id="S29394">
    <property type="entry name" value="S29394"/>
</dbReference>
<dbReference type="RefSeq" id="NP_001095269.1">
    <property type="nucleotide sequence ID" value="NM_001101799.1"/>
</dbReference>
<dbReference type="SMR" id="P30759"/>
<dbReference type="BioGRID" id="607768">
    <property type="interactions" value="1"/>
</dbReference>
<dbReference type="GeneID" id="779061"/>
<dbReference type="CTD" id="383"/>
<dbReference type="SABIO-RK" id="P30759"/>
<dbReference type="UniPathway" id="UPA00158">
    <property type="reaction ID" value="UER00270"/>
</dbReference>
<dbReference type="Proteomes" id="UP000186698">
    <property type="component" value="Unplaced"/>
</dbReference>
<dbReference type="GO" id="GO:0005737">
    <property type="term" value="C:cytoplasm"/>
    <property type="evidence" value="ECO:0000318"/>
    <property type="project" value="GO_Central"/>
</dbReference>
<dbReference type="GO" id="GO:0005829">
    <property type="term" value="C:cytosol"/>
    <property type="evidence" value="ECO:0000318"/>
    <property type="project" value="GO_Central"/>
</dbReference>
<dbReference type="GO" id="GO:0005634">
    <property type="term" value="C:nucleus"/>
    <property type="evidence" value="ECO:0007669"/>
    <property type="project" value="TreeGrafter"/>
</dbReference>
<dbReference type="GO" id="GO:0004053">
    <property type="term" value="F:arginase activity"/>
    <property type="evidence" value="ECO:0000318"/>
    <property type="project" value="GO_Central"/>
</dbReference>
<dbReference type="GO" id="GO:0030145">
    <property type="term" value="F:manganese ion binding"/>
    <property type="evidence" value="ECO:0000318"/>
    <property type="project" value="GO_Central"/>
</dbReference>
<dbReference type="GO" id="GO:0019547">
    <property type="term" value="P:arginine catabolic process to ornithine"/>
    <property type="evidence" value="ECO:0000318"/>
    <property type="project" value="GO_Central"/>
</dbReference>
<dbReference type="GO" id="GO:0000050">
    <property type="term" value="P:urea cycle"/>
    <property type="evidence" value="ECO:0007669"/>
    <property type="project" value="UniProtKB-UniPathway"/>
</dbReference>
<dbReference type="CDD" id="cd09989">
    <property type="entry name" value="Arginase"/>
    <property type="match status" value="1"/>
</dbReference>
<dbReference type="FunFam" id="3.40.800.10:FF:000012">
    <property type="entry name" value="Arginase"/>
    <property type="match status" value="1"/>
</dbReference>
<dbReference type="Gene3D" id="3.40.800.10">
    <property type="entry name" value="Ureohydrolase domain"/>
    <property type="match status" value="1"/>
</dbReference>
<dbReference type="InterPro" id="IPR014033">
    <property type="entry name" value="Arginase"/>
</dbReference>
<dbReference type="InterPro" id="IPR006035">
    <property type="entry name" value="Ureohydrolase"/>
</dbReference>
<dbReference type="InterPro" id="IPR023696">
    <property type="entry name" value="Ureohydrolase_dom_sf"/>
</dbReference>
<dbReference type="InterPro" id="IPR020855">
    <property type="entry name" value="Ureohydrolase_Mn_BS"/>
</dbReference>
<dbReference type="NCBIfam" id="TIGR01229">
    <property type="entry name" value="rocF_arginase"/>
    <property type="match status" value="1"/>
</dbReference>
<dbReference type="PANTHER" id="PTHR43782">
    <property type="entry name" value="ARGINASE"/>
    <property type="match status" value="1"/>
</dbReference>
<dbReference type="PANTHER" id="PTHR43782:SF2">
    <property type="entry name" value="ARGINASE-1"/>
    <property type="match status" value="1"/>
</dbReference>
<dbReference type="Pfam" id="PF00491">
    <property type="entry name" value="Arginase"/>
    <property type="match status" value="1"/>
</dbReference>
<dbReference type="PIRSF" id="PIRSF036979">
    <property type="entry name" value="Arginase"/>
    <property type="match status" value="1"/>
</dbReference>
<dbReference type="PRINTS" id="PR00116">
    <property type="entry name" value="ARGINASE"/>
</dbReference>
<dbReference type="SUPFAM" id="SSF52768">
    <property type="entry name" value="Arginase/deacetylase"/>
    <property type="match status" value="1"/>
</dbReference>
<dbReference type="PROSITE" id="PS01053">
    <property type="entry name" value="ARGINASE_1"/>
    <property type="match status" value="1"/>
</dbReference>
<dbReference type="PROSITE" id="PS51409">
    <property type="entry name" value="ARGINASE_2"/>
    <property type="match status" value="1"/>
</dbReference>
<gene>
    <name type="primary">arg1</name>
    <name type="synonym">argl</name>
</gene>
<name>ARGI1_XENLA</name>
<evidence type="ECO:0000250" key="1">
    <source>
        <dbReference type="UniProtKB" id="P05089"/>
    </source>
</evidence>
<evidence type="ECO:0000250" key="2">
    <source>
        <dbReference type="UniProtKB" id="P53608"/>
    </source>
</evidence>
<evidence type="ECO:0000255" key="3">
    <source>
        <dbReference type="PROSITE-ProRule" id="PRU00742"/>
    </source>
</evidence>
<evidence type="ECO:0000256" key="4">
    <source>
        <dbReference type="SAM" id="MobiDB-lite"/>
    </source>
</evidence>
<evidence type="ECO:0000269" key="5">
    <source>
    </source>
</evidence>
<keyword id="KW-0056">Arginine metabolism</keyword>
<keyword id="KW-0378">Hydrolase</keyword>
<keyword id="KW-0464">Manganese</keyword>
<keyword id="KW-0479">Metal-binding</keyword>
<keyword id="KW-1185">Reference proteome</keyword>
<keyword id="KW-0835">Urea cycle</keyword>
<accession>P30759</accession>